<name>RELCH_XENTR</name>
<feature type="chain" id="PRO_0000313096" description="RAB11-binding protein RELCH homolog">
    <location>
        <begin position="1"/>
        <end position="1196"/>
    </location>
</feature>
<feature type="domain" description="LisH" evidence="4">
    <location>
        <begin position="234"/>
        <end position="266"/>
    </location>
</feature>
<feature type="repeat" description="HEAT 1" evidence="6">
    <location>
        <begin position="620"/>
        <end position="659"/>
    </location>
</feature>
<feature type="repeat" description="HEAT 2" evidence="3">
    <location>
        <begin position="984"/>
        <end position="1022"/>
    </location>
</feature>
<feature type="region of interest" description="Disordered" evidence="5">
    <location>
        <begin position="1"/>
        <end position="73"/>
    </location>
</feature>
<feature type="region of interest" description="Disordered" evidence="5">
    <location>
        <begin position="159"/>
        <end position="180"/>
    </location>
</feature>
<feature type="region of interest" description="Disordered" evidence="5">
    <location>
        <begin position="195"/>
        <end position="225"/>
    </location>
</feature>
<feature type="region of interest" description="Disordered" evidence="5">
    <location>
        <begin position="370"/>
        <end position="393"/>
    </location>
</feature>
<feature type="coiled-coil region" evidence="2">
    <location>
        <begin position="333"/>
        <end position="374"/>
    </location>
</feature>
<feature type="compositionally biased region" description="Gly residues" evidence="5">
    <location>
        <begin position="8"/>
        <end position="26"/>
    </location>
</feature>
<feature type="compositionally biased region" description="Low complexity" evidence="5">
    <location>
        <begin position="27"/>
        <end position="37"/>
    </location>
</feature>
<feature type="compositionally biased region" description="Acidic residues" evidence="5">
    <location>
        <begin position="43"/>
        <end position="69"/>
    </location>
</feature>
<feature type="compositionally biased region" description="Polar residues" evidence="5">
    <location>
        <begin position="169"/>
        <end position="180"/>
    </location>
</feature>
<feature type="compositionally biased region" description="Basic and acidic residues" evidence="5">
    <location>
        <begin position="195"/>
        <end position="219"/>
    </location>
</feature>
<accession>Q08BT5</accession>
<gene>
    <name type="primary">relch</name>
    <name type="synonym">kiaa1468</name>
</gene>
<reference key="1">
    <citation type="submission" date="2006-10" db="EMBL/GenBank/DDBJ databases">
        <authorList>
            <consortium name="NIH - Xenopus Gene Collection (XGC) project"/>
        </authorList>
    </citation>
    <scope>NUCLEOTIDE SEQUENCE [LARGE SCALE MRNA]</scope>
    <source>
        <tissue>Brain</tissue>
    </source>
</reference>
<protein>
    <recommendedName>
        <fullName>RAB11-binding protein RELCH homolog</fullName>
    </recommendedName>
    <alternativeName>
        <fullName>LisH domain and HEAT repeat-containing protein KIAA1468</fullName>
    </alternativeName>
    <alternativeName>
        <fullName>RAB11-binding protein containing LisH, coiled-coil, and HEAT repeats</fullName>
    </alternativeName>
</protein>
<comment type="function">
    <text evidence="1">May regulate intracellular cholesterol transport.</text>
</comment>
<comment type="subcellular location">
    <subcellularLocation>
        <location evidence="1">Recycling endosome</location>
    </subcellularLocation>
    <subcellularLocation>
        <location evidence="1">Golgi apparatus</location>
        <location evidence="1">trans-Golgi network</location>
    </subcellularLocation>
</comment>
<organism>
    <name type="scientific">Xenopus tropicalis</name>
    <name type="common">Western clawed frog</name>
    <name type="synonym">Silurana tropicalis</name>
    <dbReference type="NCBI Taxonomy" id="8364"/>
    <lineage>
        <taxon>Eukaryota</taxon>
        <taxon>Metazoa</taxon>
        <taxon>Chordata</taxon>
        <taxon>Craniata</taxon>
        <taxon>Vertebrata</taxon>
        <taxon>Euteleostomi</taxon>
        <taxon>Amphibia</taxon>
        <taxon>Batrachia</taxon>
        <taxon>Anura</taxon>
        <taxon>Pipoidea</taxon>
        <taxon>Pipidae</taxon>
        <taxon>Xenopodinae</taxon>
        <taxon>Xenopus</taxon>
        <taxon>Silurana</taxon>
    </lineage>
</organism>
<evidence type="ECO:0000250" key="1">
    <source>
        <dbReference type="UniProtKB" id="Q9P260"/>
    </source>
</evidence>
<evidence type="ECO:0000255" key="2"/>
<evidence type="ECO:0000255" key="3">
    <source>
        <dbReference type="PROSITE-ProRule" id="PRU00103"/>
    </source>
</evidence>
<evidence type="ECO:0000255" key="4">
    <source>
        <dbReference type="PROSITE-ProRule" id="PRU00126"/>
    </source>
</evidence>
<evidence type="ECO:0000256" key="5">
    <source>
        <dbReference type="SAM" id="MobiDB-lite"/>
    </source>
</evidence>
<evidence type="ECO:0000305" key="6"/>
<keyword id="KW-0175">Coiled coil</keyword>
<keyword id="KW-0967">Endosome</keyword>
<keyword id="KW-0333">Golgi apparatus</keyword>
<keyword id="KW-0445">Lipid transport</keyword>
<keyword id="KW-1185">Reference proteome</keyword>
<keyword id="KW-0677">Repeat</keyword>
<keyword id="KW-0813">Transport</keyword>
<sequence>MAAPAAGSGPGGSSGGITGGAGGSLGVVGPSTSTSSVNPFLSDSEEEEDGGEEEEEEEEDDNEEDDEDVSPLNERPAASLASRYLQDEADSTLLPSAGPRLCLQPGEPGRVPLDAVAAQLLRDQLLLTALELHTELLESGRELPRLRDYFSNPGNFERATAAPPGFGGNTTASTGGQLNRAGSISTLDSLDFARYSDDGNRETDERVAENEVPLQERKNYKSSPEIQEPIKPLEKRALNFLVNEYLLKNNNKLTSITFSDENDDQDFELWDDVGLNTPKPPDLLQLYRNLSNHQTVSKDVADIAVGVIEGDLEPIQAVKQIAPDSHISQQAAIIKELEDKIILCNNEKAALLEQIGNLERQIESLQKENSASGVCSAAPPTSDRLQSQTSEESDHYIDIQITDSDAKCEGTEERLPFQQSECEPVCQVSEDIPPSPELAKIRKTTLLSAPPSKAGVHFDKPNRKLSPAFHQALLSFCRMSADSRLGSEVSQIADSENGVMKMLGRCLPHIVPNVLLAKREELIPLILCTACLHPESKERDQLLHILFNLIKRPDDEQRQMILTGCVAFARHVGPTRVEAELLPQCWEQINHKYPERRLLVAESCGDLAPYLPKEIRSSLVLAMLQQMLMEDKADMVREAVIKSLGIIMGYIDDPDKYSQGFELLLTALGDPSERVVSATHQVFLPAYAAWTMELGNLQSHLIPTLLSKIEKLLKEGEHGLDEHKLHMYLSALQSLIPSLFATVLQNAPFTSKAKLQGEVPQIEVTRFPRPVSPLQDVATIIGSREQLAVLLQLYDYQLEHEGTTGWESLLWVVNQLLPQLIEIVGRITVTSTASVHEFSRFFWRLCRTFGKIFTNTKVKPQFQEILRLSEENIDSTAGNGVLTKATVPIYATGVLTCYNQEEDRKLLVGFLEDVMTMLSLSHAPLDSLKASFVELGTNPAYHELLLTVLWYGVVHTSALVRCTAARMFELLVKGVNETLVAQRVVPALITLSSDPEISVRIATVPAFGTIMETVTQRELLERVKMQLASFLEDPQYQDQHSLQTEIIRTFGRVGPNAEPRFRDDFVLPHLHKLSFVNNQQSVDSKRLDIATHLFEAYSALSCCFISEELMMNHFLPGLRCLRTDMEQLSPEHEVILSSMIKECEQKVENKTVQEPQGSMSIAASLVSEDTKTKFLNKMGQLTTSGAMLANVFQRKK</sequence>
<dbReference type="EMBL" id="BC124571">
    <property type="protein sequence ID" value="AAI24572.1"/>
    <property type="molecule type" value="mRNA"/>
</dbReference>
<dbReference type="RefSeq" id="NP_001120526.1">
    <property type="nucleotide sequence ID" value="NM_001127054.1"/>
</dbReference>
<dbReference type="FunCoup" id="Q08BT5">
    <property type="interactions" value="1761"/>
</dbReference>
<dbReference type="STRING" id="8364.ENSXETP00000008548"/>
<dbReference type="PaxDb" id="8364-ENSXETP00000052078"/>
<dbReference type="GeneID" id="100145663"/>
<dbReference type="KEGG" id="xtr:100145663"/>
<dbReference type="AGR" id="Xenbase:XB-GENE-985071"/>
<dbReference type="CTD" id="57614"/>
<dbReference type="Xenbase" id="XB-GENE-985071">
    <property type="gene designation" value="relch"/>
</dbReference>
<dbReference type="eggNOG" id="KOG0211">
    <property type="taxonomic scope" value="Eukaryota"/>
</dbReference>
<dbReference type="InParanoid" id="Q08BT5"/>
<dbReference type="OrthoDB" id="1695393at2759"/>
<dbReference type="Proteomes" id="UP000008143">
    <property type="component" value="Chromosome 6"/>
</dbReference>
<dbReference type="ExpressionAtlas" id="Q08BT5">
    <property type="expression patterns" value="baseline and differential"/>
</dbReference>
<dbReference type="GO" id="GO:0055037">
    <property type="term" value="C:recycling endosome"/>
    <property type="evidence" value="ECO:0000250"/>
    <property type="project" value="UniProtKB"/>
</dbReference>
<dbReference type="GO" id="GO:0005802">
    <property type="term" value="C:trans-Golgi network"/>
    <property type="evidence" value="ECO:0000250"/>
    <property type="project" value="UniProtKB"/>
</dbReference>
<dbReference type="GO" id="GO:0032367">
    <property type="term" value="P:intracellular cholesterol transport"/>
    <property type="evidence" value="ECO:0000250"/>
    <property type="project" value="UniProtKB"/>
</dbReference>
<dbReference type="FunFam" id="1.25.10.10:FF:000080">
    <property type="entry name" value="lisH domain and HEAT repeat-containing protein KIAA1468 homolog"/>
    <property type="match status" value="1"/>
</dbReference>
<dbReference type="FunFam" id="1.25.10.10:FF:000218">
    <property type="entry name" value="lisH domain and HEAT repeat-containing protein KIAA1468 homolog isoform X1"/>
    <property type="match status" value="1"/>
</dbReference>
<dbReference type="Gene3D" id="1.25.10.10">
    <property type="entry name" value="Leucine-rich Repeat Variant"/>
    <property type="match status" value="2"/>
</dbReference>
<dbReference type="InterPro" id="IPR011989">
    <property type="entry name" value="ARM-like"/>
</dbReference>
<dbReference type="InterPro" id="IPR016024">
    <property type="entry name" value="ARM-type_fold"/>
</dbReference>
<dbReference type="InterPro" id="IPR021133">
    <property type="entry name" value="HEAT_type_2"/>
</dbReference>
<dbReference type="InterPro" id="IPR006594">
    <property type="entry name" value="LisH"/>
</dbReference>
<dbReference type="InterPro" id="IPR040362">
    <property type="entry name" value="RELCH"/>
</dbReference>
<dbReference type="PANTHER" id="PTHR32059">
    <property type="entry name" value="RAB11-BINDING PROTEIN RELCH"/>
    <property type="match status" value="1"/>
</dbReference>
<dbReference type="PANTHER" id="PTHR32059:SF0">
    <property type="entry name" value="RAB11-BINDING PROTEIN RELCH"/>
    <property type="match status" value="1"/>
</dbReference>
<dbReference type="SUPFAM" id="SSF48371">
    <property type="entry name" value="ARM repeat"/>
    <property type="match status" value="1"/>
</dbReference>
<dbReference type="PROSITE" id="PS50077">
    <property type="entry name" value="HEAT_REPEAT"/>
    <property type="match status" value="1"/>
</dbReference>
<dbReference type="PROSITE" id="PS50896">
    <property type="entry name" value="LISH"/>
    <property type="match status" value="1"/>
</dbReference>
<proteinExistence type="evidence at transcript level"/>